<accession>B1JY99</accession>
<reference key="1">
    <citation type="submission" date="2008-02" db="EMBL/GenBank/DDBJ databases">
        <title>Complete sequence of chromosome 1 of Burkholderia cenocepacia MC0-3.</title>
        <authorList>
            <person name="Copeland A."/>
            <person name="Lucas S."/>
            <person name="Lapidus A."/>
            <person name="Barry K."/>
            <person name="Bruce D."/>
            <person name="Goodwin L."/>
            <person name="Glavina del Rio T."/>
            <person name="Dalin E."/>
            <person name="Tice H."/>
            <person name="Pitluck S."/>
            <person name="Chain P."/>
            <person name="Malfatti S."/>
            <person name="Shin M."/>
            <person name="Vergez L."/>
            <person name="Schmutz J."/>
            <person name="Larimer F."/>
            <person name="Land M."/>
            <person name="Hauser L."/>
            <person name="Kyrpides N."/>
            <person name="Mikhailova N."/>
            <person name="Tiedje J."/>
            <person name="Richardson P."/>
        </authorList>
    </citation>
    <scope>NUCLEOTIDE SEQUENCE [LARGE SCALE GENOMIC DNA]</scope>
    <source>
        <strain>MC0-3</strain>
    </source>
</reference>
<evidence type="ECO:0000255" key="1">
    <source>
        <dbReference type="HAMAP-Rule" id="MF_00019"/>
    </source>
</evidence>
<evidence type="ECO:0000256" key="2">
    <source>
        <dbReference type="SAM" id="MobiDB-lite"/>
    </source>
</evidence>
<proteinExistence type="inferred from homology"/>
<comment type="function">
    <text evidence="1">Catalyzes the reversible formation of acyl-phosphate (acyl-PO(4)) from acyl-[acyl-carrier-protein] (acyl-ACP). This enzyme utilizes acyl-ACP as fatty acyl donor, but not acyl-CoA.</text>
</comment>
<comment type="catalytic activity">
    <reaction evidence="1">
        <text>a fatty acyl-[ACP] + phosphate = an acyl phosphate + holo-[ACP]</text>
        <dbReference type="Rhea" id="RHEA:42292"/>
        <dbReference type="Rhea" id="RHEA-COMP:9685"/>
        <dbReference type="Rhea" id="RHEA-COMP:14125"/>
        <dbReference type="ChEBI" id="CHEBI:43474"/>
        <dbReference type="ChEBI" id="CHEBI:59918"/>
        <dbReference type="ChEBI" id="CHEBI:64479"/>
        <dbReference type="ChEBI" id="CHEBI:138651"/>
        <dbReference type="EC" id="2.3.1.274"/>
    </reaction>
</comment>
<comment type="pathway">
    <text evidence="1">Lipid metabolism; phospholipid metabolism.</text>
</comment>
<comment type="subunit">
    <text evidence="1">Homodimer. Probably interacts with PlsY.</text>
</comment>
<comment type="subcellular location">
    <subcellularLocation>
        <location evidence="1">Cytoplasm</location>
    </subcellularLocation>
    <text evidence="1">Associated with the membrane possibly through PlsY.</text>
</comment>
<comment type="similarity">
    <text evidence="1">Belongs to the PlsX family.</text>
</comment>
<keyword id="KW-0963">Cytoplasm</keyword>
<keyword id="KW-0444">Lipid biosynthesis</keyword>
<keyword id="KW-0443">Lipid metabolism</keyword>
<keyword id="KW-0594">Phospholipid biosynthesis</keyword>
<keyword id="KW-1208">Phospholipid metabolism</keyword>
<keyword id="KW-0808">Transferase</keyword>
<feature type="chain" id="PRO_1000089883" description="Phosphate acyltransferase">
    <location>
        <begin position="1"/>
        <end position="368"/>
    </location>
</feature>
<feature type="region of interest" description="Disordered" evidence="2">
    <location>
        <begin position="337"/>
        <end position="368"/>
    </location>
</feature>
<gene>
    <name evidence="1" type="primary">plsX</name>
    <name type="ordered locus">Bcenmc03_1078</name>
</gene>
<protein>
    <recommendedName>
        <fullName evidence="1">Phosphate acyltransferase</fullName>
        <ecNumber evidence="1">2.3.1.274</ecNumber>
    </recommendedName>
    <alternativeName>
        <fullName evidence="1">Acyl-ACP phosphotransacylase</fullName>
    </alternativeName>
    <alternativeName>
        <fullName evidence="1">Acyl-[acyl-carrier-protein]--phosphate acyltransferase</fullName>
    </alternativeName>
    <alternativeName>
        <fullName evidence="1">Phosphate-acyl-ACP acyltransferase</fullName>
    </alternativeName>
</protein>
<sequence length="368" mass="39002">MTVKLTIDCMGGDHGPSVTVPAAVKFVRAHPDAHLMLVGIESAIRAQLKKLKALDDPALTIVPATEVVAMDDPVEVALRKKKDSSMRVALNHVKEGAAQACISAGNTGALMAVSRYVLKTLPGIERPAIAFALPNPTGYTMMLDLGANVDCEPQHLLQFAEMGHALVAALEGKERPTIGLLNIGEEVIKGNETIKRAGELLRASTLNFRGNVEGNDIYKGTVDVIVCDGFVGNVALKTSEGLAQMLSDIIREEFGRSLMSKLMALLALPVLMRFKKRVDHRQYNGAALLGLKSLVIKSHGSADAYAFEWAIKRGYDAVKNGVLERLARAMADNSVSLGDGEHDAGGAGQASPAAGHHAEPSAAQSSKA</sequence>
<dbReference type="EC" id="2.3.1.274" evidence="1"/>
<dbReference type="EMBL" id="CP000958">
    <property type="protein sequence ID" value="ACA90255.1"/>
    <property type="molecule type" value="Genomic_DNA"/>
</dbReference>
<dbReference type="RefSeq" id="WP_006476507.1">
    <property type="nucleotide sequence ID" value="NC_010508.1"/>
</dbReference>
<dbReference type="SMR" id="B1JY99"/>
<dbReference type="GeneID" id="83047872"/>
<dbReference type="KEGG" id="bcm:Bcenmc03_1078"/>
<dbReference type="HOGENOM" id="CLU_039379_1_0_4"/>
<dbReference type="UniPathway" id="UPA00085"/>
<dbReference type="Proteomes" id="UP000002169">
    <property type="component" value="Chromosome 1"/>
</dbReference>
<dbReference type="GO" id="GO:0005737">
    <property type="term" value="C:cytoplasm"/>
    <property type="evidence" value="ECO:0007669"/>
    <property type="project" value="UniProtKB-SubCell"/>
</dbReference>
<dbReference type="GO" id="GO:0043811">
    <property type="term" value="F:phosphate:acyl-[acyl carrier protein] acyltransferase activity"/>
    <property type="evidence" value="ECO:0007669"/>
    <property type="project" value="UniProtKB-UniRule"/>
</dbReference>
<dbReference type="GO" id="GO:0006633">
    <property type="term" value="P:fatty acid biosynthetic process"/>
    <property type="evidence" value="ECO:0007669"/>
    <property type="project" value="UniProtKB-UniRule"/>
</dbReference>
<dbReference type="GO" id="GO:0008654">
    <property type="term" value="P:phospholipid biosynthetic process"/>
    <property type="evidence" value="ECO:0007669"/>
    <property type="project" value="UniProtKB-KW"/>
</dbReference>
<dbReference type="Gene3D" id="3.40.718.10">
    <property type="entry name" value="Isopropylmalate Dehydrogenase"/>
    <property type="match status" value="1"/>
</dbReference>
<dbReference type="HAMAP" id="MF_00019">
    <property type="entry name" value="PlsX"/>
    <property type="match status" value="1"/>
</dbReference>
<dbReference type="InterPro" id="IPR003664">
    <property type="entry name" value="FA_synthesis"/>
</dbReference>
<dbReference type="InterPro" id="IPR012281">
    <property type="entry name" value="Phospholipid_synth_PlsX-like"/>
</dbReference>
<dbReference type="NCBIfam" id="TIGR00182">
    <property type="entry name" value="plsX"/>
    <property type="match status" value="1"/>
</dbReference>
<dbReference type="PANTHER" id="PTHR30100">
    <property type="entry name" value="FATTY ACID/PHOSPHOLIPID SYNTHESIS PROTEIN PLSX"/>
    <property type="match status" value="1"/>
</dbReference>
<dbReference type="PANTHER" id="PTHR30100:SF1">
    <property type="entry name" value="PHOSPHATE ACYLTRANSFERASE"/>
    <property type="match status" value="1"/>
</dbReference>
<dbReference type="Pfam" id="PF02504">
    <property type="entry name" value="FA_synthesis"/>
    <property type="match status" value="1"/>
</dbReference>
<dbReference type="PIRSF" id="PIRSF002465">
    <property type="entry name" value="Phsphlp_syn_PlsX"/>
    <property type="match status" value="1"/>
</dbReference>
<dbReference type="SUPFAM" id="SSF53659">
    <property type="entry name" value="Isocitrate/Isopropylmalate dehydrogenase-like"/>
    <property type="match status" value="1"/>
</dbReference>
<organism>
    <name type="scientific">Burkholderia orbicola (strain MC0-3)</name>
    <dbReference type="NCBI Taxonomy" id="406425"/>
    <lineage>
        <taxon>Bacteria</taxon>
        <taxon>Pseudomonadati</taxon>
        <taxon>Pseudomonadota</taxon>
        <taxon>Betaproteobacteria</taxon>
        <taxon>Burkholderiales</taxon>
        <taxon>Burkholderiaceae</taxon>
        <taxon>Burkholderia</taxon>
        <taxon>Burkholderia cepacia complex</taxon>
        <taxon>Burkholderia orbicola</taxon>
    </lineage>
</organism>
<name>PLSX_BURO0</name>